<protein>
    <recommendedName>
        <fullName evidence="1">Ribosome maturation factor RimP</fullName>
    </recommendedName>
</protein>
<accession>Q1JKG7</accession>
<gene>
    <name evidence="1" type="primary">rimP</name>
    <name type="ordered locus">MGAS9429_Spy1415</name>
</gene>
<dbReference type="EMBL" id="CP000259">
    <property type="protein sequence ID" value="ABF32602.1"/>
    <property type="molecule type" value="Genomic_DNA"/>
</dbReference>
<dbReference type="SMR" id="Q1JKG7"/>
<dbReference type="KEGG" id="spk:MGAS9429_Spy1415"/>
<dbReference type="HOGENOM" id="CLU_070525_2_0_9"/>
<dbReference type="Proteomes" id="UP000002433">
    <property type="component" value="Chromosome"/>
</dbReference>
<dbReference type="GO" id="GO:0005829">
    <property type="term" value="C:cytosol"/>
    <property type="evidence" value="ECO:0007669"/>
    <property type="project" value="TreeGrafter"/>
</dbReference>
<dbReference type="GO" id="GO:0000028">
    <property type="term" value="P:ribosomal small subunit assembly"/>
    <property type="evidence" value="ECO:0007669"/>
    <property type="project" value="TreeGrafter"/>
</dbReference>
<dbReference type="GO" id="GO:0006412">
    <property type="term" value="P:translation"/>
    <property type="evidence" value="ECO:0007669"/>
    <property type="project" value="TreeGrafter"/>
</dbReference>
<dbReference type="CDD" id="cd01734">
    <property type="entry name" value="YlxS_C"/>
    <property type="match status" value="1"/>
</dbReference>
<dbReference type="Gene3D" id="2.30.30.180">
    <property type="entry name" value="Ribosome maturation factor RimP, C-terminal domain"/>
    <property type="match status" value="1"/>
</dbReference>
<dbReference type="Gene3D" id="3.30.300.70">
    <property type="entry name" value="RimP-like superfamily, N-terminal"/>
    <property type="match status" value="1"/>
</dbReference>
<dbReference type="HAMAP" id="MF_01077">
    <property type="entry name" value="RimP"/>
    <property type="match status" value="1"/>
</dbReference>
<dbReference type="InterPro" id="IPR003728">
    <property type="entry name" value="Ribosome_maturation_RimP"/>
</dbReference>
<dbReference type="InterPro" id="IPR028998">
    <property type="entry name" value="RimP_C"/>
</dbReference>
<dbReference type="InterPro" id="IPR036847">
    <property type="entry name" value="RimP_C_sf"/>
</dbReference>
<dbReference type="InterPro" id="IPR028989">
    <property type="entry name" value="RimP_N"/>
</dbReference>
<dbReference type="InterPro" id="IPR035956">
    <property type="entry name" value="RimP_N_sf"/>
</dbReference>
<dbReference type="NCBIfam" id="NF000928">
    <property type="entry name" value="PRK00092.1-2"/>
    <property type="match status" value="1"/>
</dbReference>
<dbReference type="PANTHER" id="PTHR33867">
    <property type="entry name" value="RIBOSOME MATURATION FACTOR RIMP"/>
    <property type="match status" value="1"/>
</dbReference>
<dbReference type="PANTHER" id="PTHR33867:SF1">
    <property type="entry name" value="RIBOSOME MATURATION FACTOR RIMP"/>
    <property type="match status" value="1"/>
</dbReference>
<dbReference type="Pfam" id="PF17384">
    <property type="entry name" value="DUF150_C"/>
    <property type="match status" value="1"/>
</dbReference>
<dbReference type="Pfam" id="PF02576">
    <property type="entry name" value="RimP_N"/>
    <property type="match status" value="1"/>
</dbReference>
<dbReference type="SUPFAM" id="SSF74942">
    <property type="entry name" value="YhbC-like, C-terminal domain"/>
    <property type="match status" value="1"/>
</dbReference>
<dbReference type="SUPFAM" id="SSF75420">
    <property type="entry name" value="YhbC-like, N-terminal domain"/>
    <property type="match status" value="1"/>
</dbReference>
<comment type="function">
    <text evidence="1">Required for maturation of 30S ribosomal subunits.</text>
</comment>
<comment type="subcellular location">
    <subcellularLocation>
        <location evidence="1">Cytoplasm</location>
    </subcellularLocation>
</comment>
<comment type="similarity">
    <text evidence="1">Belongs to the RimP family.</text>
</comment>
<sequence>MDSQGPIILEKSIKIEEVIKIANTSIIDIVTKTVTPEIKAPYELVDVEYDKMGSDYILSILVDKEGGITVEDTSDLTNIISPLLDTIDPDPFPNQYMLEVSSPGLERPLKTADSLKAAVGSYINVSLYQAIDKVKVFQGDLLAFDGETLTIDYLDKTRHKIVNIPYQAVAKVRMAVKL</sequence>
<feature type="chain" id="PRO_1000064782" description="Ribosome maturation factor RimP">
    <location>
        <begin position="1"/>
        <end position="178"/>
    </location>
</feature>
<evidence type="ECO:0000255" key="1">
    <source>
        <dbReference type="HAMAP-Rule" id="MF_01077"/>
    </source>
</evidence>
<reference key="1">
    <citation type="journal article" date="2006" name="Proc. Natl. Acad. Sci. U.S.A.">
        <title>Molecular genetic anatomy of inter- and intraserotype variation in the human bacterial pathogen group A Streptococcus.</title>
        <authorList>
            <person name="Beres S.B."/>
            <person name="Richter E.W."/>
            <person name="Nagiec M.J."/>
            <person name="Sumby P."/>
            <person name="Porcella S.F."/>
            <person name="DeLeo F.R."/>
            <person name="Musser J.M."/>
        </authorList>
    </citation>
    <scope>NUCLEOTIDE SEQUENCE [LARGE SCALE GENOMIC DNA]</scope>
    <source>
        <strain>MGAS9429</strain>
    </source>
</reference>
<organism>
    <name type="scientific">Streptococcus pyogenes serotype M12 (strain MGAS9429)</name>
    <dbReference type="NCBI Taxonomy" id="370551"/>
    <lineage>
        <taxon>Bacteria</taxon>
        <taxon>Bacillati</taxon>
        <taxon>Bacillota</taxon>
        <taxon>Bacilli</taxon>
        <taxon>Lactobacillales</taxon>
        <taxon>Streptococcaceae</taxon>
        <taxon>Streptococcus</taxon>
    </lineage>
</organism>
<name>RIMP_STRPC</name>
<proteinExistence type="inferred from homology"/>
<keyword id="KW-0963">Cytoplasm</keyword>
<keyword id="KW-0690">Ribosome biogenesis</keyword>